<sequence length="787" mass="88461">MTEKQINVPARAYGFPPDAYDPSLLPDFDVSFLRPEDLEAFIQALSAPDTTQPPDDGLASPRSPSARSFSSFDFTKRASSVLPDDAQVVAAHAAAAGGETAPIPGDNDTNNANGFGNSSSQSLFITAQSDWAPVHEKVVGSQTHRQKKSSRRRKRSKAVAPGRRTRDETREGYLYGLLKWPFLLIVGAWIVGLAVTYLFTRAYIFIYEQFVAWRGRREKLRRNMRATSRYPDWVKAARDLDNFLGNEAWKEQNEFAYYDSKTVRRVWDSLRRSRIRAAQMEASGSQSSSSSNEGKTTPIEDLKVLIEACVKNNFVGVENPRLYSQTYYGTKNLVQNYVDEVEKSLTALLETKQLSMEDKRSIFKRVSANYGRTALCLSGGASFAYYHFGVVKALLEEDLLPDVITGTSGGALVAALVATRTNEELKKLLVPSLSTKITACREPITVWFRRWWSTGARFDSVDWAKQCSWWSHGSMTFREAYERTGRILNVSCVPADPHSPTILCNYLTSPDCVIWSAVLASAAVPGILNPVVLMMKKADGNLAPYSFGHKWKDGSLRTDIPIRALNLQFNVNFTIVSQVNPHINLFFFSSRGSVGQPVTHRRGRGWRGGFLGSATEQYIKLDLTKWLKVLRQLELLPRPLGQDWSQLWLQQSFGGTVTIWPKTILSDFVHILSDPDNARLARMIHEGQQSTFPKIKFISNRLRIERLIERGRRETRPYIRRGSVESIISEDDLRELLLLRGSTNGTDEEITTNDEMEFASDEKAVLTEDEGQFDGVTDNTEGSPLLK</sequence>
<dbReference type="EC" id="3.1.1.-"/>
<dbReference type="EMBL" id="CM001234">
    <property type="protein sequence ID" value="EHA50895.1"/>
    <property type="molecule type" value="Genomic_DNA"/>
</dbReference>
<dbReference type="RefSeq" id="XP_003717214.1">
    <property type="nucleotide sequence ID" value="XM_003717166.1"/>
</dbReference>
<dbReference type="STRING" id="242507.A4R8V2"/>
<dbReference type="EnsemblFungi" id="MGG_12849T0">
    <property type="protein sequence ID" value="MGG_12849T0"/>
    <property type="gene ID" value="MGG_12849"/>
</dbReference>
<dbReference type="GeneID" id="5050218"/>
<dbReference type="KEGG" id="mgr:MGG_12849"/>
<dbReference type="VEuPathDB" id="FungiDB:MGG_12849"/>
<dbReference type="eggNOG" id="KOG2214">
    <property type="taxonomic scope" value="Eukaryota"/>
</dbReference>
<dbReference type="HOGENOM" id="CLU_009031_2_0_1"/>
<dbReference type="InParanoid" id="A4R8V2"/>
<dbReference type="OMA" id="CSWFTRG"/>
<dbReference type="OrthoDB" id="15478at2759"/>
<dbReference type="Proteomes" id="UP000009058">
    <property type="component" value="Chromosome 4"/>
</dbReference>
<dbReference type="GO" id="GO:0016020">
    <property type="term" value="C:membrane"/>
    <property type="evidence" value="ECO:0007669"/>
    <property type="project" value="UniProtKB-SubCell"/>
</dbReference>
<dbReference type="GO" id="GO:0004806">
    <property type="term" value="F:triacylglycerol lipase activity"/>
    <property type="evidence" value="ECO:0007669"/>
    <property type="project" value="InterPro"/>
</dbReference>
<dbReference type="GO" id="GO:0016042">
    <property type="term" value="P:lipid catabolic process"/>
    <property type="evidence" value="ECO:0007669"/>
    <property type="project" value="UniProtKB-KW"/>
</dbReference>
<dbReference type="GO" id="GO:0006641">
    <property type="term" value="P:triglyceride metabolic process"/>
    <property type="evidence" value="ECO:0007669"/>
    <property type="project" value="UniProtKB-ARBA"/>
</dbReference>
<dbReference type="CDD" id="cd07232">
    <property type="entry name" value="Pat_PLPL"/>
    <property type="match status" value="1"/>
</dbReference>
<dbReference type="Gene3D" id="3.40.1090.10">
    <property type="entry name" value="Cytosolic phospholipase A2 catalytic domain"/>
    <property type="match status" value="2"/>
</dbReference>
<dbReference type="InterPro" id="IPR016035">
    <property type="entry name" value="Acyl_Trfase/lysoPLipase"/>
</dbReference>
<dbReference type="InterPro" id="IPR050301">
    <property type="entry name" value="NTE"/>
</dbReference>
<dbReference type="InterPro" id="IPR002641">
    <property type="entry name" value="PNPLA_dom"/>
</dbReference>
<dbReference type="InterPro" id="IPR021771">
    <property type="entry name" value="Triacylglycerol_lipase_N"/>
</dbReference>
<dbReference type="PANTHER" id="PTHR14226">
    <property type="entry name" value="NEUROPATHY TARGET ESTERASE/SWISS CHEESE D.MELANOGASTER"/>
    <property type="match status" value="1"/>
</dbReference>
<dbReference type="PANTHER" id="PTHR14226:SF66">
    <property type="entry name" value="TRIACYLGLYCEROL LIPASE PTL2"/>
    <property type="match status" value="1"/>
</dbReference>
<dbReference type="Pfam" id="PF11815">
    <property type="entry name" value="DUF3336"/>
    <property type="match status" value="1"/>
</dbReference>
<dbReference type="Pfam" id="PF01734">
    <property type="entry name" value="Patatin"/>
    <property type="match status" value="1"/>
</dbReference>
<dbReference type="SUPFAM" id="SSF52151">
    <property type="entry name" value="FabD/lysophospholipase-like"/>
    <property type="match status" value="1"/>
</dbReference>
<dbReference type="PROSITE" id="PS51635">
    <property type="entry name" value="PNPLA"/>
    <property type="match status" value="1"/>
</dbReference>
<name>PLPL_PYRO7</name>
<gene>
    <name type="ORF">MGG_12849</name>
</gene>
<keyword id="KW-0378">Hydrolase</keyword>
<keyword id="KW-0442">Lipid degradation</keyword>
<keyword id="KW-0443">Lipid metabolism</keyword>
<keyword id="KW-0472">Membrane</keyword>
<keyword id="KW-1185">Reference proteome</keyword>
<keyword id="KW-0812">Transmembrane</keyword>
<keyword id="KW-1133">Transmembrane helix</keyword>
<proteinExistence type="inferred from homology"/>
<evidence type="ECO:0000250" key="1"/>
<evidence type="ECO:0000255" key="2"/>
<evidence type="ECO:0000255" key="3">
    <source>
        <dbReference type="PROSITE-ProRule" id="PRU01161"/>
    </source>
</evidence>
<evidence type="ECO:0000256" key="4">
    <source>
        <dbReference type="SAM" id="MobiDB-lite"/>
    </source>
</evidence>
<evidence type="ECO:0000305" key="5"/>
<feature type="chain" id="PRO_0000295561" description="Patatin-like phospholipase domain-containing protein MGG_12849">
    <location>
        <begin position="1"/>
        <end position="787"/>
    </location>
</feature>
<feature type="transmembrane region" description="Helical" evidence="2">
    <location>
        <begin position="180"/>
        <end position="200"/>
    </location>
</feature>
<feature type="domain" description="PNPLA" evidence="3">
    <location>
        <begin position="375"/>
        <end position="566"/>
    </location>
</feature>
<feature type="region of interest" description="Disordered" evidence="4">
    <location>
        <begin position="47"/>
        <end position="69"/>
    </location>
</feature>
<feature type="region of interest" description="Disordered" evidence="4">
    <location>
        <begin position="137"/>
        <end position="164"/>
    </location>
</feature>
<feature type="region of interest" description="Disordered" evidence="4">
    <location>
        <begin position="745"/>
        <end position="787"/>
    </location>
</feature>
<feature type="short sequence motif" description="GXSXG" evidence="3">
    <location>
        <begin position="406"/>
        <end position="410"/>
    </location>
</feature>
<feature type="compositionally biased region" description="Low complexity" evidence="4">
    <location>
        <begin position="59"/>
        <end position="69"/>
    </location>
</feature>
<feature type="compositionally biased region" description="Basic residues" evidence="4">
    <location>
        <begin position="144"/>
        <end position="157"/>
    </location>
</feature>
<feature type="compositionally biased region" description="Acidic residues" evidence="4">
    <location>
        <begin position="746"/>
        <end position="759"/>
    </location>
</feature>
<feature type="compositionally biased region" description="Polar residues" evidence="4">
    <location>
        <begin position="777"/>
        <end position="787"/>
    </location>
</feature>
<feature type="active site" description="Nucleophile" evidence="3">
    <location>
        <position position="408"/>
    </location>
</feature>
<feature type="active site" description="Proton acceptor" evidence="3">
    <location>
        <position position="553"/>
    </location>
</feature>
<protein>
    <recommendedName>
        <fullName>Patatin-like phospholipase domain-containing protein MGG_12849</fullName>
        <ecNumber>3.1.1.-</ecNumber>
    </recommendedName>
</protein>
<comment type="function">
    <text evidence="1">Probable lipid hydrolase.</text>
</comment>
<comment type="subcellular location">
    <subcellularLocation>
        <location evidence="5">Membrane</location>
        <topology evidence="5">Single-pass membrane protein</topology>
    </subcellularLocation>
</comment>
<comment type="similarity">
    <text evidence="5">Belongs to the PLPL family.</text>
</comment>
<reference key="1">
    <citation type="journal article" date="2005" name="Nature">
        <title>The genome sequence of the rice blast fungus Magnaporthe grisea.</title>
        <authorList>
            <person name="Dean R.A."/>
            <person name="Talbot N.J."/>
            <person name="Ebbole D.J."/>
            <person name="Farman M.L."/>
            <person name="Mitchell T.K."/>
            <person name="Orbach M.J."/>
            <person name="Thon M.R."/>
            <person name="Kulkarni R."/>
            <person name="Xu J.-R."/>
            <person name="Pan H."/>
            <person name="Read N.D."/>
            <person name="Lee Y.-H."/>
            <person name="Carbone I."/>
            <person name="Brown D."/>
            <person name="Oh Y.Y."/>
            <person name="Donofrio N."/>
            <person name="Jeong J.S."/>
            <person name="Soanes D.M."/>
            <person name="Djonovic S."/>
            <person name="Kolomiets E."/>
            <person name="Rehmeyer C."/>
            <person name="Li W."/>
            <person name="Harding M."/>
            <person name="Kim S."/>
            <person name="Lebrun M.-H."/>
            <person name="Bohnert H."/>
            <person name="Coughlan S."/>
            <person name="Butler J."/>
            <person name="Calvo S.E."/>
            <person name="Ma L.-J."/>
            <person name="Nicol R."/>
            <person name="Purcell S."/>
            <person name="Nusbaum C."/>
            <person name="Galagan J.E."/>
            <person name="Birren B.W."/>
        </authorList>
    </citation>
    <scope>NUCLEOTIDE SEQUENCE [LARGE SCALE GENOMIC DNA]</scope>
    <source>
        <strain>70-15 / ATCC MYA-4617 / FGSC 8958</strain>
    </source>
</reference>
<organism>
    <name type="scientific">Pyricularia oryzae (strain 70-15 / ATCC MYA-4617 / FGSC 8958)</name>
    <name type="common">Rice blast fungus</name>
    <name type="synonym">Magnaporthe oryzae</name>
    <dbReference type="NCBI Taxonomy" id="242507"/>
    <lineage>
        <taxon>Eukaryota</taxon>
        <taxon>Fungi</taxon>
        <taxon>Dikarya</taxon>
        <taxon>Ascomycota</taxon>
        <taxon>Pezizomycotina</taxon>
        <taxon>Sordariomycetes</taxon>
        <taxon>Sordariomycetidae</taxon>
        <taxon>Magnaporthales</taxon>
        <taxon>Pyriculariaceae</taxon>
        <taxon>Pyricularia</taxon>
    </lineage>
</organism>
<accession>A4R8V2</accession>
<accession>G4N7U1</accession>